<accession>Q9CYH2</accession>
<feature type="chain" id="PRO_0000019551" description="Peroxiredoxin-like 2A">
    <location>
        <begin position="1"/>
        <end position="218"/>
    </location>
</feature>
<feature type="region of interest" description="Thioredoxin-like fold" evidence="1">
    <location>
        <begin position="3"/>
        <end position="101"/>
    </location>
</feature>
<feature type="active site" description="Redox-active" evidence="1">
    <location>
        <position position="74"/>
    </location>
</feature>
<feature type="active site" description="Redox-active" evidence="1">
    <location>
        <position position="77"/>
    </location>
</feature>
<reference key="1">
    <citation type="journal article" date="2005" name="Science">
        <title>The transcriptional landscape of the mammalian genome.</title>
        <authorList>
            <person name="Carninci P."/>
            <person name="Kasukawa T."/>
            <person name="Katayama S."/>
            <person name="Gough J."/>
            <person name="Frith M.C."/>
            <person name="Maeda N."/>
            <person name="Oyama R."/>
            <person name="Ravasi T."/>
            <person name="Lenhard B."/>
            <person name="Wells C."/>
            <person name="Kodzius R."/>
            <person name="Shimokawa K."/>
            <person name="Bajic V.B."/>
            <person name="Brenner S.E."/>
            <person name="Batalov S."/>
            <person name="Forrest A.R."/>
            <person name="Zavolan M."/>
            <person name="Davis M.J."/>
            <person name="Wilming L.G."/>
            <person name="Aidinis V."/>
            <person name="Allen J.E."/>
            <person name="Ambesi-Impiombato A."/>
            <person name="Apweiler R."/>
            <person name="Aturaliya R.N."/>
            <person name="Bailey T.L."/>
            <person name="Bansal M."/>
            <person name="Baxter L."/>
            <person name="Beisel K.W."/>
            <person name="Bersano T."/>
            <person name="Bono H."/>
            <person name="Chalk A.M."/>
            <person name="Chiu K.P."/>
            <person name="Choudhary V."/>
            <person name="Christoffels A."/>
            <person name="Clutterbuck D.R."/>
            <person name="Crowe M.L."/>
            <person name="Dalla E."/>
            <person name="Dalrymple B.P."/>
            <person name="de Bono B."/>
            <person name="Della Gatta G."/>
            <person name="di Bernardo D."/>
            <person name="Down T."/>
            <person name="Engstrom P."/>
            <person name="Fagiolini M."/>
            <person name="Faulkner G."/>
            <person name="Fletcher C.F."/>
            <person name="Fukushima T."/>
            <person name="Furuno M."/>
            <person name="Futaki S."/>
            <person name="Gariboldi M."/>
            <person name="Georgii-Hemming P."/>
            <person name="Gingeras T.R."/>
            <person name="Gojobori T."/>
            <person name="Green R.E."/>
            <person name="Gustincich S."/>
            <person name="Harbers M."/>
            <person name="Hayashi Y."/>
            <person name="Hensch T.K."/>
            <person name="Hirokawa N."/>
            <person name="Hill D."/>
            <person name="Huminiecki L."/>
            <person name="Iacono M."/>
            <person name="Ikeo K."/>
            <person name="Iwama A."/>
            <person name="Ishikawa T."/>
            <person name="Jakt M."/>
            <person name="Kanapin A."/>
            <person name="Katoh M."/>
            <person name="Kawasawa Y."/>
            <person name="Kelso J."/>
            <person name="Kitamura H."/>
            <person name="Kitano H."/>
            <person name="Kollias G."/>
            <person name="Krishnan S.P."/>
            <person name="Kruger A."/>
            <person name="Kummerfeld S.K."/>
            <person name="Kurochkin I.V."/>
            <person name="Lareau L.F."/>
            <person name="Lazarevic D."/>
            <person name="Lipovich L."/>
            <person name="Liu J."/>
            <person name="Liuni S."/>
            <person name="McWilliam S."/>
            <person name="Madan Babu M."/>
            <person name="Madera M."/>
            <person name="Marchionni L."/>
            <person name="Matsuda H."/>
            <person name="Matsuzawa S."/>
            <person name="Miki H."/>
            <person name="Mignone F."/>
            <person name="Miyake S."/>
            <person name="Morris K."/>
            <person name="Mottagui-Tabar S."/>
            <person name="Mulder N."/>
            <person name="Nakano N."/>
            <person name="Nakauchi H."/>
            <person name="Ng P."/>
            <person name="Nilsson R."/>
            <person name="Nishiguchi S."/>
            <person name="Nishikawa S."/>
            <person name="Nori F."/>
            <person name="Ohara O."/>
            <person name="Okazaki Y."/>
            <person name="Orlando V."/>
            <person name="Pang K.C."/>
            <person name="Pavan W.J."/>
            <person name="Pavesi G."/>
            <person name="Pesole G."/>
            <person name="Petrovsky N."/>
            <person name="Piazza S."/>
            <person name="Reed J."/>
            <person name="Reid J.F."/>
            <person name="Ring B.Z."/>
            <person name="Ringwald M."/>
            <person name="Rost B."/>
            <person name="Ruan Y."/>
            <person name="Salzberg S.L."/>
            <person name="Sandelin A."/>
            <person name="Schneider C."/>
            <person name="Schoenbach C."/>
            <person name="Sekiguchi K."/>
            <person name="Semple C.A."/>
            <person name="Seno S."/>
            <person name="Sessa L."/>
            <person name="Sheng Y."/>
            <person name="Shibata Y."/>
            <person name="Shimada H."/>
            <person name="Shimada K."/>
            <person name="Silva D."/>
            <person name="Sinclair B."/>
            <person name="Sperling S."/>
            <person name="Stupka E."/>
            <person name="Sugiura K."/>
            <person name="Sultana R."/>
            <person name="Takenaka Y."/>
            <person name="Taki K."/>
            <person name="Tammoja K."/>
            <person name="Tan S.L."/>
            <person name="Tang S."/>
            <person name="Taylor M.S."/>
            <person name="Tegner J."/>
            <person name="Teichmann S.A."/>
            <person name="Ueda H.R."/>
            <person name="van Nimwegen E."/>
            <person name="Verardo R."/>
            <person name="Wei C.L."/>
            <person name="Yagi K."/>
            <person name="Yamanishi H."/>
            <person name="Zabarovsky E."/>
            <person name="Zhu S."/>
            <person name="Zimmer A."/>
            <person name="Hide W."/>
            <person name="Bult C."/>
            <person name="Grimmond S.M."/>
            <person name="Teasdale R.D."/>
            <person name="Liu E.T."/>
            <person name="Brusic V."/>
            <person name="Quackenbush J."/>
            <person name="Wahlestedt C."/>
            <person name="Mattick J.S."/>
            <person name="Hume D.A."/>
            <person name="Kai C."/>
            <person name="Sasaki D."/>
            <person name="Tomaru Y."/>
            <person name="Fukuda S."/>
            <person name="Kanamori-Katayama M."/>
            <person name="Suzuki M."/>
            <person name="Aoki J."/>
            <person name="Arakawa T."/>
            <person name="Iida J."/>
            <person name="Imamura K."/>
            <person name="Itoh M."/>
            <person name="Kato T."/>
            <person name="Kawaji H."/>
            <person name="Kawagashira N."/>
            <person name="Kawashima T."/>
            <person name="Kojima M."/>
            <person name="Kondo S."/>
            <person name="Konno H."/>
            <person name="Nakano K."/>
            <person name="Ninomiya N."/>
            <person name="Nishio T."/>
            <person name="Okada M."/>
            <person name="Plessy C."/>
            <person name="Shibata K."/>
            <person name="Shiraki T."/>
            <person name="Suzuki S."/>
            <person name="Tagami M."/>
            <person name="Waki K."/>
            <person name="Watahiki A."/>
            <person name="Okamura-Oho Y."/>
            <person name="Suzuki H."/>
            <person name="Kawai J."/>
            <person name="Hayashizaki Y."/>
        </authorList>
    </citation>
    <scope>NUCLEOTIDE SEQUENCE [LARGE SCALE MRNA]</scope>
    <source>
        <strain>C57BL/6J</strain>
        <tissue>Embryo</tissue>
    </source>
</reference>
<reference key="2">
    <citation type="journal article" date="2004" name="Genome Res.">
        <title>The status, quality, and expansion of the NIH full-length cDNA project: the Mammalian Gene Collection (MGC).</title>
        <authorList>
            <consortium name="The MGC Project Team"/>
        </authorList>
    </citation>
    <scope>NUCLEOTIDE SEQUENCE [LARGE SCALE MRNA]</scope>
    <source>
        <strain>FVB/N</strain>
        <tissue>Kidney</tissue>
    </source>
</reference>
<reference key="3">
    <citation type="submission" date="2007-04" db="UniProtKB">
        <authorList>
            <person name="Lubec G."/>
            <person name="Kang S.U."/>
        </authorList>
    </citation>
    <scope>PROTEIN SEQUENCE OF 91-103 AND 196-206</scope>
    <scope>IDENTIFICATION BY MASS SPECTROMETRY</scope>
    <source>
        <strain>C57BL/6J</strain>
        <tissue>Brain</tissue>
    </source>
</reference>
<reference key="4">
    <citation type="journal article" date="2010" name="Antioxid. Redox Signal.">
        <title>PAMM: a redox regulatory protein that modulates osteoclast differentiation.</title>
        <authorList>
            <person name="Xu Y."/>
            <person name="Morse L.R."/>
            <person name="da Silva R.A."/>
            <person name="Odgren P.R."/>
            <person name="Sasaki H."/>
            <person name="Stashenko P."/>
            <person name="Battaglino R.A."/>
        </authorList>
    </citation>
    <scope>TISSUE SPECIFICITY</scope>
</reference>
<reference key="5">
    <citation type="journal article" date="2010" name="Cell">
        <title>A tissue-specific atlas of mouse protein phosphorylation and expression.</title>
        <authorList>
            <person name="Huttlin E.L."/>
            <person name="Jedrychowski M.P."/>
            <person name="Elias J.E."/>
            <person name="Goswami T."/>
            <person name="Rad R."/>
            <person name="Beausoleil S.A."/>
            <person name="Villen J."/>
            <person name="Haas W."/>
            <person name="Sowa M.E."/>
            <person name="Gygi S.P."/>
        </authorList>
    </citation>
    <scope>IDENTIFICATION BY MASS SPECTROMETRY [LARGE SCALE ANALYSIS]</scope>
    <source>
        <tissue>Brain</tissue>
        <tissue>Brown adipose tissue</tissue>
        <tissue>Heart</tissue>
        <tissue>Kidney</tissue>
        <tissue>Liver</tissue>
        <tissue>Lung</tissue>
        <tissue>Pancreas</tissue>
        <tissue>Spleen</tissue>
        <tissue>Testis</tissue>
    </source>
</reference>
<reference key="6">
    <citation type="journal article" date="2015" name="Biochem. J.">
        <title>Adipocyte-derived PAMM suppresses macrophage inflammation by inhibiting MAPK signalling.</title>
        <authorList>
            <person name="Guo F."/>
            <person name="He H."/>
            <person name="Fu Z.C."/>
            <person name="Huang S."/>
            <person name="Chen T."/>
            <person name="Papasian C.J."/>
            <person name="Morse L.R."/>
            <person name="Xu Y."/>
            <person name="Battaglino R.A."/>
            <person name="Yang X.F."/>
            <person name="Jiang Z."/>
            <person name="Xin H.B."/>
            <person name="Fu M."/>
        </authorList>
    </citation>
    <scope>FUNCTION</scope>
    <scope>SUBCELLULAR LOCATION</scope>
    <scope>TISSUE SPECIFICITY</scope>
</reference>
<gene>
    <name type="primary">Prxl2a</name>
    <name evidence="8" type="synonym">Fam213a</name>
    <name evidence="5 6" type="synonym">Pamm</name>
</gene>
<evidence type="ECO:0000250" key="1"/>
<evidence type="ECO:0000250" key="2">
    <source>
        <dbReference type="UniProtKB" id="Q9BRX8"/>
    </source>
</evidence>
<evidence type="ECO:0000269" key="3">
    <source>
    </source>
</evidence>
<evidence type="ECO:0000269" key="4">
    <source>
    </source>
</evidence>
<evidence type="ECO:0000303" key="5">
    <source>
    </source>
</evidence>
<evidence type="ECO:0000303" key="6">
    <source>
    </source>
</evidence>
<evidence type="ECO:0000305" key="7"/>
<evidence type="ECO:0000312" key="8">
    <source>
        <dbReference type="MGI" id="MGI:1917814"/>
    </source>
</evidence>
<sequence>MGMWSIGVGAVGAAAVALLLANTDMFLSKPRKAALEYLEDIDLKTLEKEPRTFKAKELWEKNGAVIMAVRRPGCFLCRAEAADLMSLKPKLDELGVPLYAVVKEQVKREVEDFQPYFKGEIFLDEKKKFYGPERRKMMFMGLIRLGVWYNSFRAWNGGFSGNLEGEGFILGGVFVIGSGKQGILLEHREKEFGDRVNPLSVLEAVKKIKLQTPASGRS</sequence>
<dbReference type="EMBL" id="AK017688">
    <property type="protein sequence ID" value="BAB30875.2"/>
    <property type="molecule type" value="mRNA"/>
</dbReference>
<dbReference type="EMBL" id="BC056635">
    <property type="protein sequence ID" value="AAH56635.1"/>
    <property type="molecule type" value="mRNA"/>
</dbReference>
<dbReference type="CCDS" id="CCDS26957.1"/>
<dbReference type="RefSeq" id="NP_001303661.1">
    <property type="nucleotide sequence ID" value="NM_001316732.1"/>
</dbReference>
<dbReference type="RefSeq" id="NP_001303662.1">
    <property type="nucleotide sequence ID" value="NM_001316733.1"/>
</dbReference>
<dbReference type="RefSeq" id="NP_001303663.1">
    <property type="nucleotide sequence ID" value="NM_001316734.1"/>
</dbReference>
<dbReference type="RefSeq" id="NP_001303664.1">
    <property type="nucleotide sequence ID" value="NM_001316735.1"/>
</dbReference>
<dbReference type="RefSeq" id="NP_001303665.1">
    <property type="nucleotide sequence ID" value="NM_001316736.1"/>
</dbReference>
<dbReference type="RefSeq" id="NP_001303666.1">
    <property type="nucleotide sequence ID" value="NM_001316737.1"/>
</dbReference>
<dbReference type="RefSeq" id="NP_001303668.1">
    <property type="nucleotide sequence ID" value="NM_001316739.1"/>
</dbReference>
<dbReference type="RefSeq" id="NP_001303669.1">
    <property type="nucleotide sequence ID" value="NM_001316740.1"/>
</dbReference>
<dbReference type="RefSeq" id="NP_001365744.1">
    <property type="nucleotide sequence ID" value="NM_001378815.1"/>
</dbReference>
<dbReference type="RefSeq" id="NP_081740.2">
    <property type="nucleotide sequence ID" value="NM_027464.4"/>
</dbReference>
<dbReference type="SMR" id="Q9CYH2"/>
<dbReference type="BioGRID" id="214138">
    <property type="interactions" value="6"/>
</dbReference>
<dbReference type="FunCoup" id="Q9CYH2">
    <property type="interactions" value="758"/>
</dbReference>
<dbReference type="STRING" id="10090.ENSMUSP00000112377"/>
<dbReference type="iPTMnet" id="Q9CYH2"/>
<dbReference type="PhosphoSitePlus" id="Q9CYH2"/>
<dbReference type="SwissPalm" id="Q9CYH2"/>
<dbReference type="jPOST" id="Q9CYH2"/>
<dbReference type="PaxDb" id="10090-ENSMUSP00000022317"/>
<dbReference type="ProteomicsDB" id="275514"/>
<dbReference type="Pumba" id="Q9CYH2"/>
<dbReference type="Antibodypedia" id="2394">
    <property type="antibodies" value="76 antibodies from 17 providers"/>
</dbReference>
<dbReference type="DNASU" id="70564"/>
<dbReference type="Ensembl" id="ENSMUST00000022317.15">
    <property type="protein sequence ID" value="ENSMUSP00000022317.9"/>
    <property type="gene ID" value="ENSMUSG00000021792.16"/>
</dbReference>
<dbReference type="GeneID" id="70564"/>
<dbReference type="KEGG" id="mmu:70564"/>
<dbReference type="UCSC" id="uc007tci.1">
    <property type="organism name" value="mouse"/>
</dbReference>
<dbReference type="AGR" id="MGI:1917814"/>
<dbReference type="CTD" id="84293"/>
<dbReference type="MGI" id="MGI:1917814">
    <property type="gene designation" value="Prxl2a"/>
</dbReference>
<dbReference type="VEuPathDB" id="HostDB:ENSMUSG00000021792"/>
<dbReference type="eggNOG" id="KOG4498">
    <property type="taxonomic scope" value="Eukaryota"/>
</dbReference>
<dbReference type="GeneTree" id="ENSGT00940000161199"/>
<dbReference type="InParanoid" id="Q9CYH2"/>
<dbReference type="OrthoDB" id="40334at2759"/>
<dbReference type="PhylomeDB" id="Q9CYH2"/>
<dbReference type="TreeFam" id="TF313804"/>
<dbReference type="BioGRID-ORCS" id="70564">
    <property type="hits" value="1 hit in 30 CRISPR screens"/>
</dbReference>
<dbReference type="ChiTaRS" id="Fam213a">
    <property type="organism name" value="mouse"/>
</dbReference>
<dbReference type="PRO" id="PR:Q9CYH2"/>
<dbReference type="Proteomes" id="UP000000589">
    <property type="component" value="Chromosome 14"/>
</dbReference>
<dbReference type="RNAct" id="Q9CYH2">
    <property type="molecule type" value="protein"/>
</dbReference>
<dbReference type="Bgee" id="ENSMUSG00000021792">
    <property type="expression patterns" value="Expressed in pigmented layer of retina and 295 other cell types or tissues"/>
</dbReference>
<dbReference type="ExpressionAtlas" id="Q9CYH2">
    <property type="expression patterns" value="baseline and differential"/>
</dbReference>
<dbReference type="GO" id="GO:0005576">
    <property type="term" value="C:extracellular region"/>
    <property type="evidence" value="ECO:0007669"/>
    <property type="project" value="UniProtKB-SubCell"/>
</dbReference>
<dbReference type="GO" id="GO:0005739">
    <property type="term" value="C:mitochondrion"/>
    <property type="evidence" value="ECO:0007005"/>
    <property type="project" value="MGI"/>
</dbReference>
<dbReference type="GO" id="GO:0016209">
    <property type="term" value="F:antioxidant activity"/>
    <property type="evidence" value="ECO:0007669"/>
    <property type="project" value="UniProtKB-KW"/>
</dbReference>
<dbReference type="CDD" id="cd02970">
    <property type="entry name" value="PRX_like2"/>
    <property type="match status" value="1"/>
</dbReference>
<dbReference type="FunFam" id="3.40.30.10:FF:000312">
    <property type="entry name" value="redox-regulatory protein FAM213A isoform X1"/>
    <property type="match status" value="1"/>
</dbReference>
<dbReference type="Gene3D" id="3.40.30.10">
    <property type="entry name" value="Glutaredoxin"/>
    <property type="match status" value="1"/>
</dbReference>
<dbReference type="InterPro" id="IPR032801">
    <property type="entry name" value="PXL2A/B/C"/>
</dbReference>
<dbReference type="InterPro" id="IPR036249">
    <property type="entry name" value="Thioredoxin-like_sf"/>
</dbReference>
<dbReference type="PANTHER" id="PTHR28630">
    <property type="match status" value="1"/>
</dbReference>
<dbReference type="PANTHER" id="PTHR28630:SF31">
    <property type="entry name" value="PEROXIREDOXIN-LIKE 2A"/>
    <property type="match status" value="1"/>
</dbReference>
<dbReference type="Pfam" id="PF13911">
    <property type="entry name" value="AhpC-TSA_2"/>
    <property type="match status" value="1"/>
</dbReference>
<dbReference type="SUPFAM" id="SSF52833">
    <property type="entry name" value="Thioredoxin-like"/>
    <property type="match status" value="1"/>
</dbReference>
<organism>
    <name type="scientific">Mus musculus</name>
    <name type="common">Mouse</name>
    <dbReference type="NCBI Taxonomy" id="10090"/>
    <lineage>
        <taxon>Eukaryota</taxon>
        <taxon>Metazoa</taxon>
        <taxon>Chordata</taxon>
        <taxon>Craniata</taxon>
        <taxon>Vertebrata</taxon>
        <taxon>Euteleostomi</taxon>
        <taxon>Mammalia</taxon>
        <taxon>Eutheria</taxon>
        <taxon>Euarchontoglires</taxon>
        <taxon>Glires</taxon>
        <taxon>Rodentia</taxon>
        <taxon>Myomorpha</taxon>
        <taxon>Muroidea</taxon>
        <taxon>Muridae</taxon>
        <taxon>Murinae</taxon>
        <taxon>Mus</taxon>
        <taxon>Mus</taxon>
    </lineage>
</organism>
<name>PXL2A_MOUSE</name>
<protein>
    <recommendedName>
        <fullName evidence="7">Peroxiredoxin-like 2A</fullName>
    </recommendedName>
    <alternativeName>
        <fullName evidence="5 6">Peroxiredoxin-like 2 activated in M-CSF stimulated monocytes</fullName>
        <shortName evidence="5 6">Protein PAMM</shortName>
    </alternativeName>
    <alternativeName>
        <fullName>Redox-regulatory protein FAM213A</fullName>
    </alternativeName>
</protein>
<comment type="function">
    <text evidence="2 4">Involved in redox regulation of the cell (By similarity). Acts as an antioxidant (By similarity). Inhibits TNFSF11-induced NFKB1 and JUN activation and osteoclast differentiation (By similarity). May affect bone resorption and help to maintain bone mass (By similarity). Acts as a negative regulator of macrophage-mediated inflammation by inhibiting macrophage production of inflammatory cytokines, probably through suppression of the MAPK signaling pathway (PubMed:26438880).</text>
</comment>
<comment type="subcellular location">
    <subcellularLocation>
        <location evidence="2">Cytoplasm</location>
    </subcellularLocation>
    <subcellularLocation>
        <location evidence="4">Secreted</location>
    </subcellularLocation>
    <text evidence="2">Secreted from mature adipocytes but not from preadipocytes.</text>
</comment>
<comment type="tissue specificity">
    <text evidence="3 4">Expressed in kidney, liver, skin, and brain (PubMed:19951071). Widely expressed with highest levels detected in adipose tissue (PubMed:26438880).</text>
</comment>
<comment type="miscellaneous">
    <text>The active site cysteines correspond to the redox-active cysteines of peroxiredoxins.</text>
</comment>
<comment type="similarity">
    <text evidence="7">Belongs to the peroxiredoxin-like PRXL2 family. PRXL2A subfamily.</text>
</comment>
<proteinExistence type="evidence at protein level"/>
<keyword id="KW-0049">Antioxidant</keyword>
<keyword id="KW-0963">Cytoplasm</keyword>
<keyword id="KW-0903">Direct protein sequencing</keyword>
<keyword id="KW-0676">Redox-active center</keyword>
<keyword id="KW-1185">Reference proteome</keyword>
<keyword id="KW-0964">Secreted</keyword>